<reference key="1">
    <citation type="journal article" date="2005" name="J. Bacteriol.">
        <title>Whole-genome sequencing of Staphylococcus haemolyticus uncovers the extreme plasticity of its genome and the evolution of human-colonizing staphylococcal species.</title>
        <authorList>
            <person name="Takeuchi F."/>
            <person name="Watanabe S."/>
            <person name="Baba T."/>
            <person name="Yuzawa H."/>
            <person name="Ito T."/>
            <person name="Morimoto Y."/>
            <person name="Kuroda M."/>
            <person name="Cui L."/>
            <person name="Takahashi M."/>
            <person name="Ankai A."/>
            <person name="Baba S."/>
            <person name="Fukui S."/>
            <person name="Lee J.C."/>
            <person name="Hiramatsu K."/>
        </authorList>
    </citation>
    <scope>NUCLEOTIDE SEQUENCE [LARGE SCALE GENOMIC DNA]</scope>
    <source>
        <strain>JCSC1435</strain>
    </source>
</reference>
<sequence length="520" mass="59769">MSLKEEVESRKTFAIISHPDAGKTTLTEKLLYFSGAIREAGTVKGKKTGKFATSDWMKVEQERGISVTSSVMQFDYDDYKINILDTPGHEDFSEDTYRTLMAVDSAVMVIDCAKGIEPQTLKLFKVCRMRGIPIFTFINKLDRVGKEPFELLDEIEETLNIDTYPMNWPIGMGQNFFGIIDRDSKSIEPFRDEENVLHLNDDYELQEEHAIRNDSAFAQAIEEFMLVKEAGEEFDNDALLNGELTPVFFGSALANFGVQNFLNAYVDHAPMPNARQTNEEVEVSPFDDEFSGFIFKIQANMDPKHRDRIAFMRVVSGAFERGMDVTLQRTSKKQKITRSTSFMADDKETVNHAVAGDIIGLYDTGNYQIGDTLVGGKQKYSFQDLPQFTPEIFMKVSAKNVMKQKHFHKGIEQLVQEGAIQYYKTLHTNQIILGAVGQLQFEVFEHRMKNEYNVDVVMEPVGRKIARWIENEDDIQDKMNTSRSILVKDRYDNFVFLFENEFATRWFEEKFPEIKLYSLL</sequence>
<name>RF3_STAHJ</name>
<comment type="function">
    <text evidence="1">Increases the formation of ribosomal termination complexes and stimulates activities of RF-1 and RF-2. It binds guanine nucleotides and has strong preference for UGA stop codons. It may interact directly with the ribosome. The stimulation of RF-1 and RF-2 is significantly reduced by GTP and GDP, but not by GMP.</text>
</comment>
<comment type="subcellular location">
    <subcellularLocation>
        <location evidence="1">Cytoplasm</location>
    </subcellularLocation>
</comment>
<comment type="similarity">
    <text evidence="1">Belongs to the TRAFAC class translation factor GTPase superfamily. Classic translation factor GTPase family. PrfC subfamily.</text>
</comment>
<dbReference type="EMBL" id="AP006716">
    <property type="protein sequence ID" value="BAE05248.1"/>
    <property type="molecule type" value="Genomic_DNA"/>
</dbReference>
<dbReference type="RefSeq" id="WP_011276209.1">
    <property type="nucleotide sequence ID" value="NC_007168.1"/>
</dbReference>
<dbReference type="SMR" id="Q4L527"/>
<dbReference type="KEGG" id="sha:SH1939"/>
<dbReference type="eggNOG" id="COG4108">
    <property type="taxonomic scope" value="Bacteria"/>
</dbReference>
<dbReference type="HOGENOM" id="CLU_002794_2_1_9"/>
<dbReference type="OrthoDB" id="9804431at2"/>
<dbReference type="Proteomes" id="UP000000543">
    <property type="component" value="Chromosome"/>
</dbReference>
<dbReference type="GO" id="GO:0005829">
    <property type="term" value="C:cytosol"/>
    <property type="evidence" value="ECO:0007669"/>
    <property type="project" value="TreeGrafter"/>
</dbReference>
<dbReference type="GO" id="GO:0005525">
    <property type="term" value="F:GTP binding"/>
    <property type="evidence" value="ECO:0007669"/>
    <property type="project" value="UniProtKB-UniRule"/>
</dbReference>
<dbReference type="GO" id="GO:0003924">
    <property type="term" value="F:GTPase activity"/>
    <property type="evidence" value="ECO:0007669"/>
    <property type="project" value="InterPro"/>
</dbReference>
<dbReference type="GO" id="GO:0016150">
    <property type="term" value="F:translation release factor activity, codon nonspecific"/>
    <property type="evidence" value="ECO:0007669"/>
    <property type="project" value="TreeGrafter"/>
</dbReference>
<dbReference type="GO" id="GO:0016149">
    <property type="term" value="F:translation release factor activity, codon specific"/>
    <property type="evidence" value="ECO:0007669"/>
    <property type="project" value="UniProtKB-UniRule"/>
</dbReference>
<dbReference type="GO" id="GO:0006449">
    <property type="term" value="P:regulation of translational termination"/>
    <property type="evidence" value="ECO:0007669"/>
    <property type="project" value="UniProtKB-UniRule"/>
</dbReference>
<dbReference type="CDD" id="cd04169">
    <property type="entry name" value="RF3"/>
    <property type="match status" value="1"/>
</dbReference>
<dbReference type="CDD" id="cd16259">
    <property type="entry name" value="RF3_III"/>
    <property type="match status" value="1"/>
</dbReference>
<dbReference type="FunFam" id="2.40.30.10:FF:000040">
    <property type="entry name" value="Peptide chain release factor 3"/>
    <property type="match status" value="1"/>
</dbReference>
<dbReference type="FunFam" id="3.30.70.3280:FF:000001">
    <property type="entry name" value="Peptide chain release factor 3"/>
    <property type="match status" value="1"/>
</dbReference>
<dbReference type="FunFam" id="3.40.50.300:FF:000542">
    <property type="entry name" value="Peptide chain release factor 3"/>
    <property type="match status" value="1"/>
</dbReference>
<dbReference type="Gene3D" id="3.40.50.300">
    <property type="entry name" value="P-loop containing nucleotide triphosphate hydrolases"/>
    <property type="match status" value="1"/>
</dbReference>
<dbReference type="Gene3D" id="3.30.70.3280">
    <property type="entry name" value="Peptide chain release factor 3, domain III"/>
    <property type="match status" value="1"/>
</dbReference>
<dbReference type="Gene3D" id="2.40.30.10">
    <property type="entry name" value="Translation factors"/>
    <property type="match status" value="1"/>
</dbReference>
<dbReference type="HAMAP" id="MF_00072">
    <property type="entry name" value="Rel_fac_3"/>
    <property type="match status" value="1"/>
</dbReference>
<dbReference type="InterPro" id="IPR053905">
    <property type="entry name" value="EF-G-like_DII"/>
</dbReference>
<dbReference type="InterPro" id="IPR035647">
    <property type="entry name" value="EFG_III/V"/>
</dbReference>
<dbReference type="InterPro" id="IPR031157">
    <property type="entry name" value="G_TR_CS"/>
</dbReference>
<dbReference type="InterPro" id="IPR027417">
    <property type="entry name" value="P-loop_NTPase"/>
</dbReference>
<dbReference type="InterPro" id="IPR004548">
    <property type="entry name" value="PrfC"/>
</dbReference>
<dbReference type="InterPro" id="IPR032090">
    <property type="entry name" value="RF3_C"/>
</dbReference>
<dbReference type="InterPro" id="IPR038467">
    <property type="entry name" value="RF3_dom_3_sf"/>
</dbReference>
<dbReference type="InterPro" id="IPR041732">
    <property type="entry name" value="RF3_GTP-bd"/>
</dbReference>
<dbReference type="InterPro" id="IPR005225">
    <property type="entry name" value="Small_GTP-bd"/>
</dbReference>
<dbReference type="InterPro" id="IPR000795">
    <property type="entry name" value="T_Tr_GTP-bd_dom"/>
</dbReference>
<dbReference type="InterPro" id="IPR009000">
    <property type="entry name" value="Transl_B-barrel_sf"/>
</dbReference>
<dbReference type="NCBIfam" id="TIGR00503">
    <property type="entry name" value="prfC"/>
    <property type="match status" value="1"/>
</dbReference>
<dbReference type="NCBIfam" id="NF001964">
    <property type="entry name" value="PRK00741.1"/>
    <property type="match status" value="1"/>
</dbReference>
<dbReference type="NCBIfam" id="TIGR00231">
    <property type="entry name" value="small_GTP"/>
    <property type="match status" value="1"/>
</dbReference>
<dbReference type="PANTHER" id="PTHR43556">
    <property type="entry name" value="PEPTIDE CHAIN RELEASE FACTOR RF3"/>
    <property type="match status" value="1"/>
</dbReference>
<dbReference type="PANTHER" id="PTHR43556:SF2">
    <property type="entry name" value="PEPTIDE CHAIN RELEASE FACTOR RF3"/>
    <property type="match status" value="1"/>
</dbReference>
<dbReference type="Pfam" id="PF22042">
    <property type="entry name" value="EF-G_D2"/>
    <property type="match status" value="1"/>
</dbReference>
<dbReference type="Pfam" id="PF00009">
    <property type="entry name" value="GTP_EFTU"/>
    <property type="match status" value="1"/>
</dbReference>
<dbReference type="Pfam" id="PF16658">
    <property type="entry name" value="RF3_C"/>
    <property type="match status" value="1"/>
</dbReference>
<dbReference type="PRINTS" id="PR00315">
    <property type="entry name" value="ELONGATNFCT"/>
</dbReference>
<dbReference type="SUPFAM" id="SSF54980">
    <property type="entry name" value="EF-G C-terminal domain-like"/>
    <property type="match status" value="1"/>
</dbReference>
<dbReference type="SUPFAM" id="SSF52540">
    <property type="entry name" value="P-loop containing nucleoside triphosphate hydrolases"/>
    <property type="match status" value="1"/>
</dbReference>
<dbReference type="SUPFAM" id="SSF50447">
    <property type="entry name" value="Translation proteins"/>
    <property type="match status" value="1"/>
</dbReference>
<dbReference type="PROSITE" id="PS00301">
    <property type="entry name" value="G_TR_1"/>
    <property type="match status" value="1"/>
</dbReference>
<dbReference type="PROSITE" id="PS51722">
    <property type="entry name" value="G_TR_2"/>
    <property type="match status" value="1"/>
</dbReference>
<gene>
    <name evidence="1" type="primary">prfC</name>
    <name type="ordered locus">SH1939</name>
</gene>
<protein>
    <recommendedName>
        <fullName evidence="1">Peptide chain release factor 3</fullName>
        <shortName evidence="1">RF-3</shortName>
    </recommendedName>
</protein>
<accession>Q4L527</accession>
<keyword id="KW-0963">Cytoplasm</keyword>
<keyword id="KW-0342">GTP-binding</keyword>
<keyword id="KW-0547">Nucleotide-binding</keyword>
<keyword id="KW-0648">Protein biosynthesis</keyword>
<organism>
    <name type="scientific">Staphylococcus haemolyticus (strain JCSC1435)</name>
    <dbReference type="NCBI Taxonomy" id="279808"/>
    <lineage>
        <taxon>Bacteria</taxon>
        <taxon>Bacillati</taxon>
        <taxon>Bacillota</taxon>
        <taxon>Bacilli</taxon>
        <taxon>Bacillales</taxon>
        <taxon>Staphylococcaceae</taxon>
        <taxon>Staphylococcus</taxon>
    </lineage>
</organism>
<evidence type="ECO:0000255" key="1">
    <source>
        <dbReference type="HAMAP-Rule" id="MF_00072"/>
    </source>
</evidence>
<feature type="chain" id="PRO_0000242213" description="Peptide chain release factor 3">
    <location>
        <begin position="1"/>
        <end position="520"/>
    </location>
</feature>
<feature type="domain" description="tr-type G">
    <location>
        <begin position="8"/>
        <end position="277"/>
    </location>
</feature>
<feature type="binding site" evidence="1">
    <location>
        <begin position="17"/>
        <end position="24"/>
    </location>
    <ligand>
        <name>GTP</name>
        <dbReference type="ChEBI" id="CHEBI:37565"/>
    </ligand>
</feature>
<feature type="binding site" evidence="1">
    <location>
        <begin position="85"/>
        <end position="89"/>
    </location>
    <ligand>
        <name>GTP</name>
        <dbReference type="ChEBI" id="CHEBI:37565"/>
    </ligand>
</feature>
<feature type="binding site" evidence="1">
    <location>
        <begin position="139"/>
        <end position="142"/>
    </location>
    <ligand>
        <name>GTP</name>
        <dbReference type="ChEBI" id="CHEBI:37565"/>
    </ligand>
</feature>
<proteinExistence type="inferred from homology"/>